<evidence type="ECO:0000255" key="1">
    <source>
        <dbReference type="HAMAP-Rule" id="MF_00306"/>
    </source>
</evidence>
<evidence type="ECO:0000256" key="2">
    <source>
        <dbReference type="SAM" id="MobiDB-lite"/>
    </source>
</evidence>
<evidence type="ECO:0000269" key="3">
    <source>
    </source>
</evidence>
<evidence type="ECO:0000305" key="4"/>
<name>SRP54_STRMU</name>
<organism>
    <name type="scientific">Streptococcus mutans serotype c (strain ATCC 700610 / UA159)</name>
    <dbReference type="NCBI Taxonomy" id="210007"/>
    <lineage>
        <taxon>Bacteria</taxon>
        <taxon>Bacillati</taxon>
        <taxon>Bacillota</taxon>
        <taxon>Bacilli</taxon>
        <taxon>Lactobacillales</taxon>
        <taxon>Streptococcaceae</taxon>
        <taxon>Streptococcus</taxon>
    </lineage>
</organism>
<keyword id="KW-0963">Cytoplasm</keyword>
<keyword id="KW-0342">GTP-binding</keyword>
<keyword id="KW-0378">Hydrolase</keyword>
<keyword id="KW-0547">Nucleotide-binding</keyword>
<keyword id="KW-1185">Reference proteome</keyword>
<keyword id="KW-0687">Ribonucleoprotein</keyword>
<keyword id="KW-0694">RNA-binding</keyword>
<keyword id="KW-0733">Signal recognition particle</keyword>
<protein>
    <recommendedName>
        <fullName evidence="1">Signal recognition particle protein</fullName>
        <ecNumber evidence="1">3.6.5.4</ecNumber>
    </recommendedName>
    <alternativeName>
        <fullName evidence="1">Fifty-four homolog</fullName>
    </alternativeName>
</protein>
<dbReference type="EC" id="3.6.5.4" evidence="1"/>
<dbReference type="EMBL" id="U88582">
    <property type="protein sequence ID" value="AAB48050.1"/>
    <property type="molecule type" value="Genomic_DNA"/>
</dbReference>
<dbReference type="EMBL" id="AE014133">
    <property type="protein sequence ID" value="AAN58758.1"/>
    <property type="molecule type" value="Genomic_DNA"/>
</dbReference>
<dbReference type="EMBL" id="U48883">
    <property type="protein sequence ID" value="AAC44500.1"/>
    <property type="molecule type" value="Genomic_DNA"/>
</dbReference>
<dbReference type="RefSeq" id="NP_721452.1">
    <property type="nucleotide sequence ID" value="NC_004350.2"/>
</dbReference>
<dbReference type="RefSeq" id="WP_002262280.1">
    <property type="nucleotide sequence ID" value="NC_004350.2"/>
</dbReference>
<dbReference type="SMR" id="Q54431"/>
<dbReference type="STRING" id="210007.SMU_1060"/>
<dbReference type="KEGG" id="smu:SMU_1060"/>
<dbReference type="PATRIC" id="fig|210007.7.peg.947"/>
<dbReference type="eggNOG" id="COG0541">
    <property type="taxonomic scope" value="Bacteria"/>
</dbReference>
<dbReference type="HOGENOM" id="CLU_009301_6_0_9"/>
<dbReference type="OrthoDB" id="9804720at2"/>
<dbReference type="PhylomeDB" id="Q54431"/>
<dbReference type="Proteomes" id="UP000002512">
    <property type="component" value="Chromosome"/>
</dbReference>
<dbReference type="GO" id="GO:0048500">
    <property type="term" value="C:signal recognition particle"/>
    <property type="evidence" value="ECO:0007669"/>
    <property type="project" value="UniProtKB-UniRule"/>
</dbReference>
<dbReference type="GO" id="GO:0008312">
    <property type="term" value="F:7S RNA binding"/>
    <property type="evidence" value="ECO:0007669"/>
    <property type="project" value="InterPro"/>
</dbReference>
<dbReference type="GO" id="GO:0016887">
    <property type="term" value="F:ATP hydrolysis activity"/>
    <property type="evidence" value="ECO:0007669"/>
    <property type="project" value="InterPro"/>
</dbReference>
<dbReference type="GO" id="GO:0005525">
    <property type="term" value="F:GTP binding"/>
    <property type="evidence" value="ECO:0007669"/>
    <property type="project" value="UniProtKB-UniRule"/>
</dbReference>
<dbReference type="GO" id="GO:0003924">
    <property type="term" value="F:GTPase activity"/>
    <property type="evidence" value="ECO:0007669"/>
    <property type="project" value="UniProtKB-UniRule"/>
</dbReference>
<dbReference type="GO" id="GO:0006614">
    <property type="term" value="P:SRP-dependent cotranslational protein targeting to membrane"/>
    <property type="evidence" value="ECO:0007669"/>
    <property type="project" value="InterPro"/>
</dbReference>
<dbReference type="CDD" id="cd18539">
    <property type="entry name" value="SRP_G"/>
    <property type="match status" value="1"/>
</dbReference>
<dbReference type="FunFam" id="3.40.50.300:FF:000022">
    <property type="entry name" value="Signal recognition particle 54 kDa subunit"/>
    <property type="match status" value="1"/>
</dbReference>
<dbReference type="Gene3D" id="3.40.50.300">
    <property type="entry name" value="P-loop containing nucleotide triphosphate hydrolases"/>
    <property type="match status" value="1"/>
</dbReference>
<dbReference type="Gene3D" id="1.20.120.140">
    <property type="entry name" value="Signal recognition particle SRP54, nucleotide-binding domain"/>
    <property type="match status" value="1"/>
</dbReference>
<dbReference type="Gene3D" id="1.10.260.30">
    <property type="entry name" value="Signal recognition particle, SRP54 subunit, M-domain"/>
    <property type="match status" value="1"/>
</dbReference>
<dbReference type="HAMAP" id="MF_00306">
    <property type="entry name" value="SRP54"/>
    <property type="match status" value="1"/>
</dbReference>
<dbReference type="InterPro" id="IPR003593">
    <property type="entry name" value="AAA+_ATPase"/>
</dbReference>
<dbReference type="InterPro" id="IPR027417">
    <property type="entry name" value="P-loop_NTPase"/>
</dbReference>
<dbReference type="InterPro" id="IPR036891">
    <property type="entry name" value="Signal_recog_part_SRP54_M_sf"/>
</dbReference>
<dbReference type="InterPro" id="IPR013822">
    <property type="entry name" value="Signal_recog_particl_SRP54_hlx"/>
</dbReference>
<dbReference type="InterPro" id="IPR004125">
    <property type="entry name" value="Signal_recog_particle_SRP54_M"/>
</dbReference>
<dbReference type="InterPro" id="IPR004780">
    <property type="entry name" value="SRP"/>
</dbReference>
<dbReference type="InterPro" id="IPR022941">
    <property type="entry name" value="SRP54"/>
</dbReference>
<dbReference type="InterPro" id="IPR000897">
    <property type="entry name" value="SRP54_GTPase_dom"/>
</dbReference>
<dbReference type="InterPro" id="IPR042101">
    <property type="entry name" value="SRP54_N_sf"/>
</dbReference>
<dbReference type="NCBIfam" id="TIGR00959">
    <property type="entry name" value="ffh"/>
    <property type="match status" value="1"/>
</dbReference>
<dbReference type="PANTHER" id="PTHR11564">
    <property type="entry name" value="SIGNAL RECOGNITION PARTICLE 54K PROTEIN SRP54"/>
    <property type="match status" value="1"/>
</dbReference>
<dbReference type="PANTHER" id="PTHR11564:SF5">
    <property type="entry name" value="SIGNAL RECOGNITION PARTICLE SUBUNIT SRP54"/>
    <property type="match status" value="1"/>
</dbReference>
<dbReference type="Pfam" id="PF00448">
    <property type="entry name" value="SRP54"/>
    <property type="match status" value="1"/>
</dbReference>
<dbReference type="Pfam" id="PF02881">
    <property type="entry name" value="SRP54_N"/>
    <property type="match status" value="1"/>
</dbReference>
<dbReference type="Pfam" id="PF02978">
    <property type="entry name" value="SRP_SPB"/>
    <property type="match status" value="1"/>
</dbReference>
<dbReference type="SMART" id="SM00382">
    <property type="entry name" value="AAA"/>
    <property type="match status" value="1"/>
</dbReference>
<dbReference type="SMART" id="SM00962">
    <property type="entry name" value="SRP54"/>
    <property type="match status" value="1"/>
</dbReference>
<dbReference type="SMART" id="SM00963">
    <property type="entry name" value="SRP54_N"/>
    <property type="match status" value="1"/>
</dbReference>
<dbReference type="SUPFAM" id="SSF52540">
    <property type="entry name" value="P-loop containing nucleoside triphosphate hydrolases"/>
    <property type="match status" value="1"/>
</dbReference>
<dbReference type="SUPFAM" id="SSF47446">
    <property type="entry name" value="Signal peptide-binding domain"/>
    <property type="match status" value="1"/>
</dbReference>
<dbReference type="PROSITE" id="PS00300">
    <property type="entry name" value="SRP54"/>
    <property type="match status" value="1"/>
</dbReference>
<proteinExistence type="inferred from homology"/>
<sequence length="516" mass="57071">MAFESLTERLQGVFKNLRGKRKLSEKDVQEVTKEIRLALLEADVALPVVKEFIKRVRKRAVGHEVIDTLDPSQQIIKIVNEELTAVLGSETAEIEKSSKIPTIIMMVGLQGAGKTTFAGKLANKLVKEENARPLMIAADIYRPAAIDQLKTLGQQINVPVFDMGTEHSAVEIVSQGLAQAKENRNDYVLIDTAGRLQIDEKLMTELRDIKALANPNEILLVVDSMIGQEAANVAREFNQQLEVTGVILTKIDGDTRGGAALSVRQITGKPIKFTGTGEKITDIETFHPDRMSSRILGMGDLLTLIEKASQDYDEQKSAELAEKMRENSFDFNDFIEQLDQVQNMGSMEDILKMIPGMANNPALANVKVDEGEIARKRAIVSSMTPEERENPDLLTPSRRRRIASGSGNTFVNVNKFIKDFNQAKKMMQGVMSGDMNKVMKQMGINPNNMPKNMDSSALEGMMGQGGMPDMSELSGTNMDVSQMFGGGLKGKVGEFAMKQSMKKMAKRMKKAKKRKK</sequence>
<gene>
    <name evidence="1" type="primary">ffh</name>
    <name type="ordered locus">SMU_1060</name>
</gene>
<feature type="chain" id="PRO_0000101167" description="Signal recognition particle protein">
    <location>
        <begin position="1"/>
        <end position="516"/>
    </location>
</feature>
<feature type="region of interest" description="Disordered" evidence="2">
    <location>
        <begin position="383"/>
        <end position="405"/>
    </location>
</feature>
<feature type="binding site" evidence="1">
    <location>
        <begin position="108"/>
        <end position="115"/>
    </location>
    <ligand>
        <name>GTP</name>
        <dbReference type="ChEBI" id="CHEBI:37565"/>
    </ligand>
</feature>
<feature type="binding site" evidence="1">
    <location>
        <begin position="191"/>
        <end position="195"/>
    </location>
    <ligand>
        <name>GTP</name>
        <dbReference type="ChEBI" id="CHEBI:37565"/>
    </ligand>
</feature>
<feature type="binding site" evidence="1">
    <location>
        <begin position="249"/>
        <end position="252"/>
    </location>
    <ligand>
        <name>GTP</name>
        <dbReference type="ChEBI" id="CHEBI:37565"/>
    </ligand>
</feature>
<feature type="sequence conflict" description="In Ref. 3; AAC44500." evidence="4" ref="3">
    <original>V</original>
    <variation>A</variation>
    <location>
        <position position="49"/>
    </location>
</feature>
<feature type="sequence conflict" description="In Ref. 1; AAB48050." evidence="4" ref="1">
    <original>T</original>
    <variation>I</variation>
    <location>
        <position position="151"/>
    </location>
</feature>
<feature type="sequence conflict" description="In Ref. 1; AAB48050." evidence="4" ref="1">
    <original>K</original>
    <variation>E</variation>
    <location>
        <position position="367"/>
    </location>
</feature>
<feature type="sequence conflict" description="In Ref. 1; AAB48050." evidence="4" ref="1">
    <original>K</original>
    <variation>N</variation>
    <location>
        <position position="451"/>
    </location>
</feature>
<feature type="sequence conflict" description="In Ref. 1; AAB48050." evidence="4" ref="1">
    <original>E</original>
    <variation>G</variation>
    <location>
        <position position="472"/>
    </location>
</feature>
<feature type="sequence conflict" description="In Ref. 1; AAB48050." evidence="4" ref="1">
    <original>T</original>
    <variation>A</variation>
    <location>
        <position position="476"/>
    </location>
</feature>
<reference key="1">
    <citation type="submission" date="1997-02" db="EMBL/GenBank/DDBJ databases">
        <title>Ffh of Streptococcus mutans is involved in acidurance.</title>
        <authorList>
            <person name="Gutierrez J.A."/>
            <person name="Cvitkovitch D.G."/>
            <person name="Brady L.J."/>
            <person name="Hamilton I.R."/>
            <person name="Hillman J.D."/>
            <person name="Bleiweis A.S."/>
        </authorList>
    </citation>
    <scope>NUCLEOTIDE SEQUENCE [GENOMIC DNA]</scope>
    <source>
        <strain>JH1005</strain>
    </source>
</reference>
<reference key="2">
    <citation type="journal article" date="2002" name="Proc. Natl. Acad. Sci. U.S.A.">
        <title>Genome sequence of Streptococcus mutans UA159, a cariogenic dental pathogen.</title>
        <authorList>
            <person name="Ajdic D.J."/>
            <person name="McShan W.M."/>
            <person name="McLaughlin R.E."/>
            <person name="Savic G."/>
            <person name="Chang J."/>
            <person name="Carson M.B."/>
            <person name="Primeaux C."/>
            <person name="Tian R."/>
            <person name="Kenton S."/>
            <person name="Jia H.G."/>
            <person name="Lin S.P."/>
            <person name="Qian Y."/>
            <person name="Li S."/>
            <person name="Zhu H."/>
            <person name="Najar F.Z."/>
            <person name="Lai H."/>
            <person name="White J."/>
            <person name="Roe B.A."/>
            <person name="Ferretti J.J."/>
        </authorList>
    </citation>
    <scope>NUCLEOTIDE SEQUENCE [LARGE SCALE GENOMIC DNA]</scope>
    <source>
        <strain>ATCC 700610 / UA159</strain>
    </source>
</reference>
<reference key="3">
    <citation type="journal article" date="1996" name="J. Bacteriol.">
        <title>Insertional mutagenesis and recovery of interrupted genes of Streptococcus mutans by using transposon Tn917: preliminary characterization of mutants displaying acid sensitivity and nutritional requirements.</title>
        <authorList>
            <person name="Gutierrez J.A."/>
            <person name="Crowley P.J."/>
            <person name="Brown D.P."/>
            <person name="Hillman J.D."/>
            <person name="Youngman P."/>
            <person name="Bleiweis A.S."/>
        </authorList>
    </citation>
    <scope>NUCLEOTIDE SEQUENCE [GENOMIC DNA] OF 1-142</scope>
    <source>
        <strain>JH1005</strain>
    </source>
</reference>
<reference key="4">
    <citation type="journal article" date="2005" name="Proc. Natl. Acad. Sci. U.S.A.">
        <title>Streptococcal viability and diminished stress tolerance in mutants lacking the signal recognition particle pathway or YidC2.</title>
        <authorList>
            <person name="Hasona A."/>
            <person name="Crowley P.J."/>
            <person name="Levesque C.M."/>
            <person name="Mair R.W."/>
            <person name="Cvitkovitch D.G."/>
            <person name="Bleiweis A.S."/>
            <person name="Brady L.J."/>
        </authorList>
    </citation>
    <scope>DISRUPTION PHENOTYPE</scope>
    <source>
        <strain>NG8</strain>
    </source>
</reference>
<accession>Q54431</accession>
<accession>P96469</accession>
<comment type="function">
    <text evidence="1">Involved in targeting and insertion of nascent membrane proteins into the cytoplasmic membrane. Binds to the hydrophobic signal sequence of the ribosome-nascent chain (RNC) as it emerges from the ribosomes. The SRP-RNC complex is then targeted to the cytoplasmic membrane where it interacts with the SRP receptor FtsY.</text>
</comment>
<comment type="catalytic activity">
    <reaction evidence="1">
        <text>GTP + H2O = GDP + phosphate + H(+)</text>
        <dbReference type="Rhea" id="RHEA:19669"/>
        <dbReference type="ChEBI" id="CHEBI:15377"/>
        <dbReference type="ChEBI" id="CHEBI:15378"/>
        <dbReference type="ChEBI" id="CHEBI:37565"/>
        <dbReference type="ChEBI" id="CHEBI:43474"/>
        <dbReference type="ChEBI" id="CHEBI:58189"/>
        <dbReference type="EC" id="3.6.5.4"/>
    </reaction>
</comment>
<comment type="subunit">
    <text evidence="1">Part of the signal recognition particle protein translocation system, which is composed of SRP and FtsY.</text>
</comment>
<comment type="subcellular location">
    <subcellularLocation>
        <location evidence="1">Cytoplasm</location>
    </subcellularLocation>
    <text evidence="1">The SRP-RNC complex is targeted to the cytoplasmic membrane.</text>
</comment>
<comment type="domain">
    <text evidence="1">Composed of three domains: the N-terminal N domain, which is responsible for interactions with the ribosome, the central G domain, which binds GTP, and the C-terminal M domain, which binds the RNA and the signal sequence of the RNC.</text>
</comment>
<comment type="disruption phenotype">
    <text evidence="3">Doubling time increases for growth under nonstress conditions, unable to initiate growth at pH 5.0 and under 3.5% NaCl salt stress. Double deletions of Ffh and FtsY, Ffh and scRNA, or Ffh and YidC2 are barely able to grow in the absence of stress.</text>
</comment>
<comment type="similarity">
    <text evidence="1">Belongs to the GTP-binding SRP family. SRP54 subfamily.</text>
</comment>